<comment type="function">
    <text evidence="1">Probable pentose-5-phosphate 3-epimerase.</text>
</comment>
<comment type="cofactor">
    <cofactor evidence="1">
        <name>Co(2+)</name>
        <dbReference type="ChEBI" id="CHEBI:48828"/>
    </cofactor>
    <cofactor evidence="1">
        <name>Fe(2+)</name>
        <dbReference type="ChEBI" id="CHEBI:29033"/>
    </cofactor>
    <cofactor evidence="1">
        <name>Mn(2+)</name>
        <dbReference type="ChEBI" id="CHEBI:29035"/>
    </cofactor>
    <cofactor evidence="1">
        <name>Zn(2+)</name>
        <dbReference type="ChEBI" id="CHEBI:29105"/>
    </cofactor>
    <text evidence="1">Binds 1 divalent metal cation per subunit. Active with Co(2+), Fe(2+), Mn(2+) and Zn(2+).</text>
</comment>
<comment type="pathway">
    <text evidence="1">Carbohydrate degradation.</text>
</comment>
<comment type="similarity">
    <text evidence="3">Belongs to the ribulose-phosphate 3-epimerase family.</text>
</comment>
<evidence type="ECO:0000250" key="1">
    <source>
        <dbReference type="UniProtKB" id="P0AG07"/>
    </source>
</evidence>
<evidence type="ECO:0000250" key="2">
    <source>
        <dbReference type="UniProtKB" id="P32719"/>
    </source>
</evidence>
<evidence type="ECO:0000305" key="3"/>
<name>SGCE_ECOLI</name>
<gene>
    <name type="primary">sgcE</name>
    <name type="synonym">yjhK</name>
    <name type="ordered locus">b4301</name>
    <name type="ordered locus">JW4263</name>
</gene>
<keyword id="KW-0119">Carbohydrate metabolism</keyword>
<keyword id="KW-0170">Cobalt</keyword>
<keyword id="KW-0408">Iron</keyword>
<keyword id="KW-0413">Isomerase</keyword>
<keyword id="KW-0464">Manganese</keyword>
<keyword id="KW-0479">Metal-binding</keyword>
<keyword id="KW-1185">Reference proteome</keyword>
<keyword id="KW-0862">Zinc</keyword>
<dbReference type="EC" id="5.1.3.-" evidence="1"/>
<dbReference type="EMBL" id="U14003">
    <property type="protein sequence ID" value="AAA97197.1"/>
    <property type="molecule type" value="Genomic_DNA"/>
</dbReference>
<dbReference type="EMBL" id="U00096">
    <property type="protein sequence ID" value="AAC77257.1"/>
    <property type="molecule type" value="Genomic_DNA"/>
</dbReference>
<dbReference type="EMBL" id="AP009048">
    <property type="protein sequence ID" value="BAE78292.1"/>
    <property type="molecule type" value="Genomic_DNA"/>
</dbReference>
<dbReference type="PIR" id="S56526">
    <property type="entry name" value="S56526"/>
</dbReference>
<dbReference type="RefSeq" id="NP_418721.1">
    <property type="nucleotide sequence ID" value="NC_000913.3"/>
</dbReference>
<dbReference type="RefSeq" id="WP_000600622.1">
    <property type="nucleotide sequence ID" value="NZ_SSUV01000012.1"/>
</dbReference>
<dbReference type="SMR" id="P39362"/>
<dbReference type="BioGRID" id="4260976">
    <property type="interactions" value="10"/>
</dbReference>
<dbReference type="BioGRID" id="853109">
    <property type="interactions" value="1"/>
</dbReference>
<dbReference type="DIP" id="DIP-10878N"/>
<dbReference type="FunCoup" id="P39362">
    <property type="interactions" value="11"/>
</dbReference>
<dbReference type="IntAct" id="P39362">
    <property type="interactions" value="5"/>
</dbReference>
<dbReference type="STRING" id="511145.b4301"/>
<dbReference type="PaxDb" id="511145-b4301"/>
<dbReference type="EnsemblBacteria" id="AAC77257">
    <property type="protein sequence ID" value="AAC77257"/>
    <property type="gene ID" value="b4301"/>
</dbReference>
<dbReference type="GeneID" id="948829"/>
<dbReference type="KEGG" id="ecj:JW4263"/>
<dbReference type="KEGG" id="eco:b4301"/>
<dbReference type="KEGG" id="ecoc:C3026_23205"/>
<dbReference type="PATRIC" id="fig|1411691.4.peg.2396"/>
<dbReference type="EchoBASE" id="EB2441"/>
<dbReference type="eggNOG" id="COG0036">
    <property type="taxonomic scope" value="Bacteria"/>
</dbReference>
<dbReference type="HOGENOM" id="CLU_054856_2_0_6"/>
<dbReference type="InParanoid" id="P39362"/>
<dbReference type="OMA" id="TMCEKVS"/>
<dbReference type="OrthoDB" id="1645589at2"/>
<dbReference type="PhylomeDB" id="P39362"/>
<dbReference type="BioCyc" id="EcoCyc:G7914-MONOMER"/>
<dbReference type="PRO" id="PR:P39362"/>
<dbReference type="Proteomes" id="UP000000625">
    <property type="component" value="Chromosome"/>
</dbReference>
<dbReference type="GO" id="GO:0005829">
    <property type="term" value="C:cytosol"/>
    <property type="evidence" value="ECO:0000318"/>
    <property type="project" value="GO_Central"/>
</dbReference>
<dbReference type="GO" id="GO:0004750">
    <property type="term" value="F:D-ribulose-phosphate 3-epimerase activity"/>
    <property type="evidence" value="ECO:0000318"/>
    <property type="project" value="GO_Central"/>
</dbReference>
<dbReference type="GO" id="GO:0046872">
    <property type="term" value="F:metal ion binding"/>
    <property type="evidence" value="ECO:0000318"/>
    <property type="project" value="GO_Central"/>
</dbReference>
<dbReference type="GO" id="GO:0005975">
    <property type="term" value="P:carbohydrate metabolic process"/>
    <property type="evidence" value="ECO:0000318"/>
    <property type="project" value="GO_Central"/>
</dbReference>
<dbReference type="GO" id="GO:0009052">
    <property type="term" value="P:pentose-phosphate shunt, non-oxidative branch"/>
    <property type="evidence" value="ECO:0000318"/>
    <property type="project" value="GO_Central"/>
</dbReference>
<dbReference type="CDD" id="cd00429">
    <property type="entry name" value="RPE"/>
    <property type="match status" value="1"/>
</dbReference>
<dbReference type="Gene3D" id="3.20.20.70">
    <property type="entry name" value="Aldolase class I"/>
    <property type="match status" value="1"/>
</dbReference>
<dbReference type="InterPro" id="IPR013785">
    <property type="entry name" value="Aldolase_TIM"/>
</dbReference>
<dbReference type="InterPro" id="IPR000056">
    <property type="entry name" value="Ribul_P_3_epim-like"/>
</dbReference>
<dbReference type="InterPro" id="IPR011060">
    <property type="entry name" value="RibuloseP-bd_barrel"/>
</dbReference>
<dbReference type="NCBIfam" id="NF005944">
    <property type="entry name" value="PRK08005.1"/>
    <property type="match status" value="1"/>
</dbReference>
<dbReference type="PANTHER" id="PTHR11749">
    <property type="entry name" value="RIBULOSE-5-PHOSPHATE-3-EPIMERASE"/>
    <property type="match status" value="1"/>
</dbReference>
<dbReference type="Pfam" id="PF00834">
    <property type="entry name" value="Ribul_P_3_epim"/>
    <property type="match status" value="1"/>
</dbReference>
<dbReference type="SUPFAM" id="SSF51366">
    <property type="entry name" value="Ribulose-phoshate binding barrel"/>
    <property type="match status" value="1"/>
</dbReference>
<dbReference type="PROSITE" id="PS01085">
    <property type="entry name" value="RIBUL_P_3_EPIMER_1"/>
    <property type="match status" value="1"/>
</dbReference>
<dbReference type="PROSITE" id="PS01086">
    <property type="entry name" value="RIBUL_P_3_EPIMER_2"/>
    <property type="match status" value="1"/>
</dbReference>
<organism>
    <name type="scientific">Escherichia coli (strain K12)</name>
    <dbReference type="NCBI Taxonomy" id="83333"/>
    <lineage>
        <taxon>Bacteria</taxon>
        <taxon>Pseudomonadati</taxon>
        <taxon>Pseudomonadota</taxon>
        <taxon>Gammaproteobacteria</taxon>
        <taxon>Enterobacterales</taxon>
        <taxon>Enterobacteriaceae</taxon>
        <taxon>Escherichia</taxon>
    </lineage>
</organism>
<feature type="chain" id="PRO_0000171586" description="Protein SgcE">
    <location>
        <begin position="1"/>
        <end position="210"/>
    </location>
</feature>
<feature type="active site" description="Proton acceptor" evidence="2">
    <location>
        <position position="33"/>
    </location>
</feature>
<feature type="active site" description="Proton donor" evidence="2">
    <location>
        <position position="169"/>
    </location>
</feature>
<feature type="binding site" evidence="2">
    <location>
        <position position="6"/>
    </location>
    <ligand>
        <name>substrate</name>
    </ligand>
</feature>
<feature type="binding site" evidence="2">
    <location>
        <position position="31"/>
    </location>
    <ligand>
        <name>a divalent metal cation</name>
        <dbReference type="ChEBI" id="CHEBI:60240"/>
    </ligand>
</feature>
<feature type="binding site" evidence="2">
    <location>
        <position position="33"/>
    </location>
    <ligand>
        <name>a divalent metal cation</name>
        <dbReference type="ChEBI" id="CHEBI:60240"/>
    </ligand>
</feature>
<feature type="binding site" evidence="2">
    <location>
        <position position="64"/>
    </location>
    <ligand>
        <name>a divalent metal cation</name>
        <dbReference type="ChEBI" id="CHEBI:60240"/>
    </ligand>
</feature>
<feature type="binding site" evidence="2">
    <location>
        <position position="64"/>
    </location>
    <ligand>
        <name>substrate</name>
    </ligand>
</feature>
<feature type="binding site" evidence="2">
    <location>
        <begin position="140"/>
        <end position="143"/>
    </location>
    <ligand>
        <name>substrate</name>
    </ligand>
</feature>
<feature type="binding site" evidence="2">
    <location>
        <begin position="169"/>
        <end position="171"/>
    </location>
    <ligand>
        <name>substrate</name>
    </ligand>
</feature>
<feature type="binding site" evidence="2">
    <location>
        <position position="169"/>
    </location>
    <ligand>
        <name>a divalent metal cation</name>
        <dbReference type="ChEBI" id="CHEBI:60240"/>
    </ligand>
</feature>
<feature type="binding site" evidence="2">
    <location>
        <begin position="191"/>
        <end position="192"/>
    </location>
    <ligand>
        <name>substrate</name>
    </ligand>
</feature>
<protein>
    <recommendedName>
        <fullName>Protein SgcE</fullName>
        <ecNumber evidence="1">5.1.3.-</ecNumber>
    </recommendedName>
</protein>
<reference key="1">
    <citation type="journal article" date="1995" name="Nucleic Acids Res.">
        <title>Analysis of the Escherichia coli genome VI: DNA sequence of the region from 92.8 through 100 minutes.</title>
        <authorList>
            <person name="Burland V.D."/>
            <person name="Plunkett G. III"/>
            <person name="Sofia H.J."/>
            <person name="Daniels D.L."/>
            <person name="Blattner F.R."/>
        </authorList>
    </citation>
    <scope>NUCLEOTIDE SEQUENCE [LARGE SCALE GENOMIC DNA]</scope>
    <source>
        <strain>K12 / MG1655 / ATCC 47076</strain>
    </source>
</reference>
<reference key="2">
    <citation type="journal article" date="1997" name="Science">
        <title>The complete genome sequence of Escherichia coli K-12.</title>
        <authorList>
            <person name="Blattner F.R."/>
            <person name="Plunkett G. III"/>
            <person name="Bloch C.A."/>
            <person name="Perna N.T."/>
            <person name="Burland V."/>
            <person name="Riley M."/>
            <person name="Collado-Vides J."/>
            <person name="Glasner J.D."/>
            <person name="Rode C.K."/>
            <person name="Mayhew G.F."/>
            <person name="Gregor J."/>
            <person name="Davis N.W."/>
            <person name="Kirkpatrick H.A."/>
            <person name="Goeden M.A."/>
            <person name="Rose D.J."/>
            <person name="Mau B."/>
            <person name="Shao Y."/>
        </authorList>
    </citation>
    <scope>NUCLEOTIDE SEQUENCE [LARGE SCALE GENOMIC DNA]</scope>
    <source>
        <strain>K12 / MG1655 / ATCC 47076</strain>
    </source>
</reference>
<reference key="3">
    <citation type="journal article" date="2006" name="Mol. Syst. Biol.">
        <title>Highly accurate genome sequences of Escherichia coli K-12 strains MG1655 and W3110.</title>
        <authorList>
            <person name="Hayashi K."/>
            <person name="Morooka N."/>
            <person name="Yamamoto Y."/>
            <person name="Fujita K."/>
            <person name="Isono K."/>
            <person name="Choi S."/>
            <person name="Ohtsubo E."/>
            <person name="Baba T."/>
            <person name="Wanner B.L."/>
            <person name="Mori H."/>
            <person name="Horiuchi T."/>
        </authorList>
    </citation>
    <scope>NUCLEOTIDE SEQUENCE [LARGE SCALE GENOMIC DNA]</scope>
    <source>
        <strain>K12 / W3110 / ATCC 27325 / DSM 5911</strain>
    </source>
</reference>
<reference key="4">
    <citation type="journal article" date="1996" name="Genome Sci. Technol.">
        <title>Novel phosphotransferases system genes revealed by bacterial genome analysis: operons encoding homologues of sugar-specific permease domains of the phosphotransferase system and pentose catabolic enzymes.</title>
        <authorList>
            <person name="Reizer J."/>
            <person name="Charbit A."/>
            <person name="Reizer A."/>
            <person name="Saier M.H. Jr."/>
        </authorList>
    </citation>
    <scope>DISCUSSION OF SEQUENCE</scope>
</reference>
<proteinExistence type="inferred from homology"/>
<sequence>MILHPSLASANPLHYGRELTALDNLDFGSLHLDIEDSSFINNITFGMKTVQAVARQTPHPLSFHFMLARPQRWFNALAEIRPAWIFVHAETLDYPSETLTEIRHTGARAGLVFNPATPIDAWRYLASELDGVMVMTSEPDGQGQRFIPSMCEKIQKVRTAFPQTECWADGGITLAAAQQLAAAGAQHMVIGRALFSSSDYRATLAQFATL</sequence>
<accession>P39362</accession>
<accession>Q2M614</accession>